<dbReference type="EMBL" id="CP000517">
    <property type="protein sequence ID" value="ABX26533.1"/>
    <property type="molecule type" value="Genomic_DNA"/>
</dbReference>
<dbReference type="RefSeq" id="WP_003625773.1">
    <property type="nucleotide sequence ID" value="NC_010080.1"/>
</dbReference>
<dbReference type="SMR" id="A8YXK2"/>
<dbReference type="GeneID" id="83725550"/>
<dbReference type="KEGG" id="lhe:lhv_0309"/>
<dbReference type="eggNOG" id="COG0049">
    <property type="taxonomic scope" value="Bacteria"/>
</dbReference>
<dbReference type="HOGENOM" id="CLU_072226_1_1_9"/>
<dbReference type="Proteomes" id="UP000000790">
    <property type="component" value="Chromosome"/>
</dbReference>
<dbReference type="GO" id="GO:0015935">
    <property type="term" value="C:small ribosomal subunit"/>
    <property type="evidence" value="ECO:0007669"/>
    <property type="project" value="InterPro"/>
</dbReference>
<dbReference type="GO" id="GO:0019843">
    <property type="term" value="F:rRNA binding"/>
    <property type="evidence" value="ECO:0007669"/>
    <property type="project" value="UniProtKB-UniRule"/>
</dbReference>
<dbReference type="GO" id="GO:0003735">
    <property type="term" value="F:structural constituent of ribosome"/>
    <property type="evidence" value="ECO:0007669"/>
    <property type="project" value="InterPro"/>
</dbReference>
<dbReference type="GO" id="GO:0000049">
    <property type="term" value="F:tRNA binding"/>
    <property type="evidence" value="ECO:0007669"/>
    <property type="project" value="UniProtKB-UniRule"/>
</dbReference>
<dbReference type="GO" id="GO:0006412">
    <property type="term" value="P:translation"/>
    <property type="evidence" value="ECO:0007669"/>
    <property type="project" value="UniProtKB-UniRule"/>
</dbReference>
<dbReference type="CDD" id="cd14869">
    <property type="entry name" value="uS7_Bacteria"/>
    <property type="match status" value="1"/>
</dbReference>
<dbReference type="FunFam" id="1.10.455.10:FF:000001">
    <property type="entry name" value="30S ribosomal protein S7"/>
    <property type="match status" value="1"/>
</dbReference>
<dbReference type="Gene3D" id="1.10.455.10">
    <property type="entry name" value="Ribosomal protein S7 domain"/>
    <property type="match status" value="1"/>
</dbReference>
<dbReference type="HAMAP" id="MF_00480_B">
    <property type="entry name" value="Ribosomal_uS7_B"/>
    <property type="match status" value="1"/>
</dbReference>
<dbReference type="InterPro" id="IPR000235">
    <property type="entry name" value="Ribosomal_uS7"/>
</dbReference>
<dbReference type="InterPro" id="IPR005717">
    <property type="entry name" value="Ribosomal_uS7_bac/org-type"/>
</dbReference>
<dbReference type="InterPro" id="IPR020606">
    <property type="entry name" value="Ribosomal_uS7_CS"/>
</dbReference>
<dbReference type="InterPro" id="IPR023798">
    <property type="entry name" value="Ribosomal_uS7_dom"/>
</dbReference>
<dbReference type="InterPro" id="IPR036823">
    <property type="entry name" value="Ribosomal_uS7_dom_sf"/>
</dbReference>
<dbReference type="NCBIfam" id="TIGR01029">
    <property type="entry name" value="rpsG_bact"/>
    <property type="match status" value="1"/>
</dbReference>
<dbReference type="PANTHER" id="PTHR11205">
    <property type="entry name" value="RIBOSOMAL PROTEIN S7"/>
    <property type="match status" value="1"/>
</dbReference>
<dbReference type="Pfam" id="PF00177">
    <property type="entry name" value="Ribosomal_S7"/>
    <property type="match status" value="1"/>
</dbReference>
<dbReference type="PIRSF" id="PIRSF002122">
    <property type="entry name" value="RPS7p_RPS7a_RPS5e_RPS7o"/>
    <property type="match status" value="1"/>
</dbReference>
<dbReference type="SUPFAM" id="SSF47973">
    <property type="entry name" value="Ribosomal protein S7"/>
    <property type="match status" value="1"/>
</dbReference>
<dbReference type="PROSITE" id="PS00052">
    <property type="entry name" value="RIBOSOMAL_S7"/>
    <property type="match status" value="1"/>
</dbReference>
<protein>
    <recommendedName>
        <fullName evidence="1">Small ribosomal subunit protein uS7</fullName>
    </recommendedName>
    <alternativeName>
        <fullName evidence="2">30S ribosomal protein S7</fullName>
    </alternativeName>
</protein>
<feature type="chain" id="PRO_1000072407" description="Small ribosomal subunit protein uS7">
    <location>
        <begin position="1"/>
        <end position="156"/>
    </location>
</feature>
<comment type="function">
    <text evidence="1">One of the primary rRNA binding proteins, it binds directly to 16S rRNA where it nucleates assembly of the head domain of the 30S subunit. Is located at the subunit interface close to the decoding center, probably blocks exit of the E-site tRNA.</text>
</comment>
<comment type="subunit">
    <text evidence="1">Part of the 30S ribosomal subunit. Contacts proteins S9 and S11.</text>
</comment>
<comment type="similarity">
    <text evidence="1">Belongs to the universal ribosomal protein uS7 family.</text>
</comment>
<name>RS7_LACH4</name>
<gene>
    <name evidence="1" type="primary">rpsG</name>
    <name type="ordered locus">lhv_0309</name>
</gene>
<accession>A8YXK2</accession>
<keyword id="KW-0687">Ribonucleoprotein</keyword>
<keyword id="KW-0689">Ribosomal protein</keyword>
<keyword id="KW-0694">RNA-binding</keyword>
<keyword id="KW-0699">rRNA-binding</keyword>
<keyword id="KW-0820">tRNA-binding</keyword>
<sequence length="156" mass="17888">MPRKGHVTKRAVLADPVYNSKLVTKLINHLMIDGKRAKASSILYDAFNIVQDKTGKEPLDVFEEAMNNVMPVLEVRARRIGGSNYQIPVEVRPERRTTLGLRWLVSYARLRNEHTMDERLANEIIDASNNTGSAVKKREDVHRMAEANRAFAHYRF</sequence>
<proteinExistence type="inferred from homology"/>
<reference key="1">
    <citation type="journal article" date="2008" name="J. Bacteriol.">
        <title>Genome sequence of Lactobacillus helveticus: an organism distinguished by selective gene loss and IS element expansion.</title>
        <authorList>
            <person name="Callanan M."/>
            <person name="Kaleta P."/>
            <person name="O'Callaghan J."/>
            <person name="O'Sullivan O."/>
            <person name="Jordan K."/>
            <person name="McAuliffe O."/>
            <person name="Sangrador-Vegas A."/>
            <person name="Slattery L."/>
            <person name="Fitzgerald G.F."/>
            <person name="Beresford T."/>
            <person name="Ross R.P."/>
        </authorList>
    </citation>
    <scope>NUCLEOTIDE SEQUENCE [LARGE SCALE GENOMIC DNA]</scope>
    <source>
        <strain>DPC 4571</strain>
    </source>
</reference>
<organism>
    <name type="scientific">Lactobacillus helveticus (strain DPC 4571)</name>
    <dbReference type="NCBI Taxonomy" id="405566"/>
    <lineage>
        <taxon>Bacteria</taxon>
        <taxon>Bacillati</taxon>
        <taxon>Bacillota</taxon>
        <taxon>Bacilli</taxon>
        <taxon>Lactobacillales</taxon>
        <taxon>Lactobacillaceae</taxon>
        <taxon>Lactobacillus</taxon>
    </lineage>
</organism>
<evidence type="ECO:0000255" key="1">
    <source>
        <dbReference type="HAMAP-Rule" id="MF_00480"/>
    </source>
</evidence>
<evidence type="ECO:0000305" key="2"/>